<keyword id="KW-0963">Cytoplasm</keyword>
<keyword id="KW-0342">GTP-binding</keyword>
<keyword id="KW-0396">Initiation factor</keyword>
<keyword id="KW-0547">Nucleotide-binding</keyword>
<keyword id="KW-0648">Protein biosynthesis</keyword>
<feature type="chain" id="PRO_0000228175" description="Translation initiation factor IF-2">
    <location>
        <begin position="1"/>
        <end position="959"/>
    </location>
</feature>
<feature type="domain" description="tr-type G">
    <location>
        <begin position="457"/>
        <end position="626"/>
    </location>
</feature>
<feature type="region of interest" description="Disordered" evidence="3">
    <location>
        <begin position="1"/>
        <end position="374"/>
    </location>
</feature>
<feature type="region of interest" description="G1" evidence="1">
    <location>
        <begin position="466"/>
        <end position="473"/>
    </location>
</feature>
<feature type="region of interest" description="G2" evidence="1">
    <location>
        <begin position="491"/>
        <end position="495"/>
    </location>
</feature>
<feature type="region of interest" description="G3" evidence="1">
    <location>
        <begin position="512"/>
        <end position="515"/>
    </location>
</feature>
<feature type="region of interest" description="G4" evidence="1">
    <location>
        <begin position="566"/>
        <end position="569"/>
    </location>
</feature>
<feature type="region of interest" description="G5" evidence="1">
    <location>
        <begin position="602"/>
        <end position="604"/>
    </location>
</feature>
<feature type="compositionally biased region" description="Basic and acidic residues" evidence="3">
    <location>
        <begin position="1"/>
        <end position="10"/>
    </location>
</feature>
<feature type="compositionally biased region" description="Polar residues" evidence="3">
    <location>
        <begin position="27"/>
        <end position="37"/>
    </location>
</feature>
<feature type="compositionally biased region" description="Low complexity" evidence="3">
    <location>
        <begin position="63"/>
        <end position="118"/>
    </location>
</feature>
<feature type="compositionally biased region" description="Low complexity" evidence="3">
    <location>
        <begin position="128"/>
        <end position="138"/>
    </location>
</feature>
<feature type="compositionally biased region" description="Basic and acidic residues" evidence="3">
    <location>
        <begin position="154"/>
        <end position="225"/>
    </location>
</feature>
<feature type="compositionally biased region" description="Basic and acidic residues" evidence="3">
    <location>
        <begin position="232"/>
        <end position="241"/>
    </location>
</feature>
<feature type="compositionally biased region" description="Low complexity" evidence="3">
    <location>
        <begin position="246"/>
        <end position="284"/>
    </location>
</feature>
<feature type="compositionally biased region" description="Basic and acidic residues" evidence="3">
    <location>
        <begin position="318"/>
        <end position="333"/>
    </location>
</feature>
<feature type="binding site" evidence="2">
    <location>
        <begin position="466"/>
        <end position="473"/>
    </location>
    <ligand>
        <name>GTP</name>
        <dbReference type="ChEBI" id="CHEBI:37565"/>
    </ligand>
</feature>
<feature type="binding site" evidence="2">
    <location>
        <begin position="512"/>
        <end position="516"/>
    </location>
    <ligand>
        <name>GTP</name>
        <dbReference type="ChEBI" id="CHEBI:37565"/>
    </ligand>
</feature>
<feature type="binding site" evidence="2">
    <location>
        <begin position="566"/>
        <end position="569"/>
    </location>
    <ligand>
        <name>GTP</name>
        <dbReference type="ChEBI" id="CHEBI:37565"/>
    </ligand>
</feature>
<gene>
    <name evidence="2" type="primary">infB</name>
    <name type="ordered locus">BruAb1_2138</name>
</gene>
<accession>Q57AA0</accession>
<sequence length="959" mass="104141">MSDKTNDDKTLSVNPKKTLTLKRPGVEQSTVRQNFSHGRTKAVVVETKKRKFSRPDEKPEVEAAAAPKPAAPAAAPQQAPASAPVSASAAQASAPQPAPVKAPATKAPAAPSAPVTKPHVAQQRPVHQRPGGQQAQRPRPADRSGMVLNTLSRSEMDARRRALEEAQIREVEERARAVEEAKRRAEEDARRAKEREESARRQAEEEARLKAEAEARRKAEEEAAKRMPQPEARSERRDDARPAPYGARPQQAGRPQGGRPQPAGRPQQGSPRPAPIIADAAPIAGKPLPQSQLRKPGQSDDDDDRRSGAARRGVAAKPEVRAPKVVKGEDDRRRGKLTLTSNLEEEGRSRSLSAMRRRQEKFKRSQMQETREKISREVTIPETITLQELAQRMAERSVDIIKYLMKQGQMMKPGDVIDADTAQLIAEEFGHTVKRVAESDVEEGIFDVADNESAMVSRPPVVTIMGHVDHGKTSLLDAIRHANVVSGEAGGITQHIGAYQVVQNGQKITFIDTPGHAAFTAMRARGAQATDIAILVVAADDSVMPQTIESINHAKAAGVPIIVAINKIDKPAADPQKVRTALLQHEVFVESMGGEVLDVEVSAKNKINLDKLLDAVLLQAEMLDLKADPDRTAEGVVIEAQLDRGRGSVATVLIQKGTLHPGDILVAGSEWGRVRALVNDRGEHVKEAGPAMPVEILGLQGTPQAGDRFAVVANEAKAREIAEYRQRLARDKAVARQSGARGSLEQMMNQLQVSGTKEFPLVIKGDVQGSIEAITNALDKLGTDEVRARIVHSGAGGITESDVSLAEASNAAIIGFNVRANKQARDSAEQQGIEIRYYNIIYDLIDDVKAAMSGLLSPERRETFLGNAEILEVFNITKVGKVAGCRVTEGKVERGAGVRLIRDNVVIHEGKLKTLKRFKDEVAEVPSGQECGMAFENYDDIRAGDVIEAFRVEHVSRTL</sequence>
<evidence type="ECO:0000250" key="1"/>
<evidence type="ECO:0000255" key="2">
    <source>
        <dbReference type="HAMAP-Rule" id="MF_00100"/>
    </source>
</evidence>
<evidence type="ECO:0000256" key="3">
    <source>
        <dbReference type="SAM" id="MobiDB-lite"/>
    </source>
</evidence>
<dbReference type="EMBL" id="AE017223">
    <property type="protein sequence ID" value="AAX75434.1"/>
    <property type="molecule type" value="Genomic_DNA"/>
</dbReference>
<dbReference type="RefSeq" id="WP_002965227.1">
    <property type="nucleotide sequence ID" value="NC_006932.1"/>
</dbReference>
<dbReference type="SMR" id="Q57AA0"/>
<dbReference type="EnsemblBacteria" id="AAX75434">
    <property type="protein sequence ID" value="AAX75434"/>
    <property type="gene ID" value="BruAb1_2138"/>
</dbReference>
<dbReference type="GeneID" id="93017533"/>
<dbReference type="KEGG" id="bmb:BruAb1_2138"/>
<dbReference type="HOGENOM" id="CLU_006301_10_0_5"/>
<dbReference type="Proteomes" id="UP000000540">
    <property type="component" value="Chromosome I"/>
</dbReference>
<dbReference type="GO" id="GO:0005829">
    <property type="term" value="C:cytosol"/>
    <property type="evidence" value="ECO:0007669"/>
    <property type="project" value="TreeGrafter"/>
</dbReference>
<dbReference type="GO" id="GO:0005525">
    <property type="term" value="F:GTP binding"/>
    <property type="evidence" value="ECO:0007669"/>
    <property type="project" value="UniProtKB-KW"/>
</dbReference>
<dbReference type="GO" id="GO:0003924">
    <property type="term" value="F:GTPase activity"/>
    <property type="evidence" value="ECO:0007669"/>
    <property type="project" value="UniProtKB-UniRule"/>
</dbReference>
<dbReference type="GO" id="GO:0097216">
    <property type="term" value="F:guanosine tetraphosphate binding"/>
    <property type="evidence" value="ECO:0007669"/>
    <property type="project" value="UniProtKB-ARBA"/>
</dbReference>
<dbReference type="GO" id="GO:0003743">
    <property type="term" value="F:translation initiation factor activity"/>
    <property type="evidence" value="ECO:0007669"/>
    <property type="project" value="UniProtKB-UniRule"/>
</dbReference>
<dbReference type="CDD" id="cd01887">
    <property type="entry name" value="IF2_eIF5B"/>
    <property type="match status" value="1"/>
</dbReference>
<dbReference type="CDD" id="cd03702">
    <property type="entry name" value="IF2_mtIF2_II"/>
    <property type="match status" value="1"/>
</dbReference>
<dbReference type="CDD" id="cd03692">
    <property type="entry name" value="mtIF2_IVc"/>
    <property type="match status" value="1"/>
</dbReference>
<dbReference type="CDD" id="cd22265">
    <property type="entry name" value="UDM1_RNF168"/>
    <property type="match status" value="1"/>
</dbReference>
<dbReference type="FunFam" id="2.40.30.10:FF:000007">
    <property type="entry name" value="Translation initiation factor IF-2"/>
    <property type="match status" value="1"/>
</dbReference>
<dbReference type="FunFam" id="2.40.30.10:FF:000008">
    <property type="entry name" value="Translation initiation factor IF-2"/>
    <property type="match status" value="1"/>
</dbReference>
<dbReference type="FunFam" id="3.40.50.10050:FF:000001">
    <property type="entry name" value="Translation initiation factor IF-2"/>
    <property type="match status" value="1"/>
</dbReference>
<dbReference type="FunFam" id="3.40.50.300:FF:000019">
    <property type="entry name" value="Translation initiation factor IF-2"/>
    <property type="match status" value="1"/>
</dbReference>
<dbReference type="Gene3D" id="3.40.50.300">
    <property type="entry name" value="P-loop containing nucleotide triphosphate hydrolases"/>
    <property type="match status" value="1"/>
</dbReference>
<dbReference type="Gene3D" id="2.40.30.10">
    <property type="entry name" value="Translation factors"/>
    <property type="match status" value="2"/>
</dbReference>
<dbReference type="Gene3D" id="3.40.50.10050">
    <property type="entry name" value="Translation initiation factor IF- 2, domain 3"/>
    <property type="match status" value="1"/>
</dbReference>
<dbReference type="HAMAP" id="MF_00100_B">
    <property type="entry name" value="IF_2_B"/>
    <property type="match status" value="1"/>
</dbReference>
<dbReference type="InterPro" id="IPR053905">
    <property type="entry name" value="EF-G-like_DII"/>
</dbReference>
<dbReference type="InterPro" id="IPR004161">
    <property type="entry name" value="EFTu-like_2"/>
</dbReference>
<dbReference type="InterPro" id="IPR013575">
    <property type="entry name" value="IF2_assoc_dom_bac"/>
</dbReference>
<dbReference type="InterPro" id="IPR044145">
    <property type="entry name" value="IF2_II"/>
</dbReference>
<dbReference type="InterPro" id="IPR006847">
    <property type="entry name" value="IF2_N"/>
</dbReference>
<dbReference type="InterPro" id="IPR027417">
    <property type="entry name" value="P-loop_NTPase"/>
</dbReference>
<dbReference type="InterPro" id="IPR005225">
    <property type="entry name" value="Small_GTP-bd"/>
</dbReference>
<dbReference type="InterPro" id="IPR000795">
    <property type="entry name" value="T_Tr_GTP-bd_dom"/>
</dbReference>
<dbReference type="InterPro" id="IPR000178">
    <property type="entry name" value="TF_IF2_bacterial-like"/>
</dbReference>
<dbReference type="InterPro" id="IPR015760">
    <property type="entry name" value="TIF_IF2"/>
</dbReference>
<dbReference type="InterPro" id="IPR023115">
    <property type="entry name" value="TIF_IF2_dom3"/>
</dbReference>
<dbReference type="InterPro" id="IPR036925">
    <property type="entry name" value="TIF_IF2_dom3_sf"/>
</dbReference>
<dbReference type="InterPro" id="IPR009000">
    <property type="entry name" value="Transl_B-barrel_sf"/>
</dbReference>
<dbReference type="NCBIfam" id="TIGR00487">
    <property type="entry name" value="IF-2"/>
    <property type="match status" value="1"/>
</dbReference>
<dbReference type="NCBIfam" id="TIGR00231">
    <property type="entry name" value="small_GTP"/>
    <property type="match status" value="1"/>
</dbReference>
<dbReference type="PANTHER" id="PTHR43381:SF5">
    <property type="entry name" value="TR-TYPE G DOMAIN-CONTAINING PROTEIN"/>
    <property type="match status" value="1"/>
</dbReference>
<dbReference type="PANTHER" id="PTHR43381">
    <property type="entry name" value="TRANSLATION INITIATION FACTOR IF-2-RELATED"/>
    <property type="match status" value="1"/>
</dbReference>
<dbReference type="Pfam" id="PF22042">
    <property type="entry name" value="EF-G_D2"/>
    <property type="match status" value="1"/>
</dbReference>
<dbReference type="Pfam" id="PF00009">
    <property type="entry name" value="GTP_EFTU"/>
    <property type="match status" value="1"/>
</dbReference>
<dbReference type="Pfam" id="PF03144">
    <property type="entry name" value="GTP_EFTU_D2"/>
    <property type="match status" value="1"/>
</dbReference>
<dbReference type="Pfam" id="PF11987">
    <property type="entry name" value="IF-2"/>
    <property type="match status" value="1"/>
</dbReference>
<dbReference type="Pfam" id="PF08364">
    <property type="entry name" value="IF2_assoc"/>
    <property type="match status" value="1"/>
</dbReference>
<dbReference type="Pfam" id="PF04760">
    <property type="entry name" value="IF2_N"/>
    <property type="match status" value="1"/>
</dbReference>
<dbReference type="SUPFAM" id="SSF52156">
    <property type="entry name" value="Initiation factor IF2/eIF5b, domain 3"/>
    <property type="match status" value="1"/>
</dbReference>
<dbReference type="SUPFAM" id="SSF52540">
    <property type="entry name" value="P-loop containing nucleoside triphosphate hydrolases"/>
    <property type="match status" value="1"/>
</dbReference>
<dbReference type="SUPFAM" id="SSF50447">
    <property type="entry name" value="Translation proteins"/>
    <property type="match status" value="2"/>
</dbReference>
<dbReference type="PROSITE" id="PS51722">
    <property type="entry name" value="G_TR_2"/>
    <property type="match status" value="1"/>
</dbReference>
<dbReference type="PROSITE" id="PS01176">
    <property type="entry name" value="IF2"/>
    <property type="match status" value="1"/>
</dbReference>
<comment type="function">
    <text evidence="2">One of the essential components for the initiation of protein synthesis. Protects formylmethionyl-tRNA from spontaneous hydrolysis and promotes its binding to the 30S ribosomal subunits. Also involved in the hydrolysis of GTP during the formation of the 70S ribosomal complex.</text>
</comment>
<comment type="subcellular location">
    <subcellularLocation>
        <location evidence="2">Cytoplasm</location>
    </subcellularLocation>
</comment>
<comment type="similarity">
    <text evidence="2">Belongs to the TRAFAC class translation factor GTPase superfamily. Classic translation factor GTPase family. IF-2 subfamily.</text>
</comment>
<reference key="1">
    <citation type="journal article" date="2005" name="J. Bacteriol.">
        <title>Completion of the genome sequence of Brucella abortus and comparison to the highly similar genomes of Brucella melitensis and Brucella suis.</title>
        <authorList>
            <person name="Halling S.M."/>
            <person name="Peterson-Burch B.D."/>
            <person name="Bricker B.J."/>
            <person name="Zuerner R.L."/>
            <person name="Qing Z."/>
            <person name="Li L.-L."/>
            <person name="Kapur V."/>
            <person name="Alt D.P."/>
            <person name="Olsen S.C."/>
        </authorList>
    </citation>
    <scope>NUCLEOTIDE SEQUENCE [LARGE SCALE GENOMIC DNA]</scope>
    <source>
        <strain>9-941</strain>
    </source>
</reference>
<protein>
    <recommendedName>
        <fullName evidence="2">Translation initiation factor IF-2</fullName>
    </recommendedName>
</protein>
<proteinExistence type="inferred from homology"/>
<name>IF2_BRUAB</name>
<organism>
    <name type="scientific">Brucella abortus biovar 1 (strain 9-941)</name>
    <dbReference type="NCBI Taxonomy" id="262698"/>
    <lineage>
        <taxon>Bacteria</taxon>
        <taxon>Pseudomonadati</taxon>
        <taxon>Pseudomonadota</taxon>
        <taxon>Alphaproteobacteria</taxon>
        <taxon>Hyphomicrobiales</taxon>
        <taxon>Brucellaceae</taxon>
        <taxon>Brucella/Ochrobactrum group</taxon>
        <taxon>Brucella</taxon>
    </lineage>
</organism>